<keyword id="KW-0002">3D-structure</keyword>
<keyword id="KW-0325">Glycoprotein</keyword>
<keyword id="KW-0472">Membrane</keyword>
<keyword id="KW-0675">Receptor</keyword>
<keyword id="KW-1185">Reference proteome</keyword>
<keyword id="KW-0677">Repeat</keyword>
<keyword id="KW-0732">Signal</keyword>
<keyword id="KW-0812">Transmembrane</keyword>
<keyword id="KW-1133">Transmembrane helix</keyword>
<protein>
    <recommendedName>
        <fullName>Interleukin-27 receptor subunit alpha</fullName>
        <shortName>IL-27 receptor subunit alpha</shortName>
        <shortName>IL-27R subunit alpha</shortName>
        <shortName>IL-27R-alpha</shortName>
        <shortName>IL-27RA</shortName>
    </recommendedName>
    <alternativeName>
        <fullName>Type I T-cell cytokine receptor</fullName>
        <shortName>TCCR</shortName>
    </alternativeName>
    <alternativeName>
        <fullName>WSX-1</fullName>
    </alternativeName>
</protein>
<proteinExistence type="evidence at protein level"/>
<reference key="1">
    <citation type="journal article" date="1998" name="Biochem. Biophys. Res. Commun.">
        <title>Cloning and characterization of a novel class I cytokine receptor.</title>
        <authorList>
            <person name="Sprecher C.A."/>
            <person name="Grant F.J."/>
            <person name="Baumgartner J.W."/>
            <person name="Presnell S.R."/>
            <person name="Schrader S.K."/>
            <person name="Yamagiwa T."/>
            <person name="Whitmore T.E."/>
            <person name="O'Hara P.J."/>
            <person name="Foster D.F."/>
        </authorList>
    </citation>
    <scope>NUCLEOTIDE SEQUENCE [MRNA]</scope>
    <source>
        <tissue>Spleen</tissue>
    </source>
</reference>
<reference key="2">
    <citation type="journal article" date="2000" name="Nature">
        <title>Development of Th1-type immune responses requires the type I cytokine receptor TCCR.</title>
        <authorList>
            <person name="Chen Q."/>
            <person name="Ghilardi N."/>
            <person name="Wang H."/>
            <person name="Baker T."/>
            <person name="Xie M.-H."/>
            <person name="Gurney A."/>
            <person name="Grewal I.S."/>
            <person name="de Sauvage F.J."/>
        </authorList>
    </citation>
    <scope>NUCLEOTIDE SEQUENCE [MRNA]</scope>
    <scope>TISSUE SPECIFICITY</scope>
    <source>
        <tissue>Spleen</tissue>
    </source>
</reference>
<reference key="3">
    <citation type="journal article" date="2009" name="PLoS Biol.">
        <title>Lineage-specific biology revealed by a finished genome assembly of the mouse.</title>
        <authorList>
            <person name="Church D.M."/>
            <person name="Goodstadt L."/>
            <person name="Hillier L.W."/>
            <person name="Zody M.C."/>
            <person name="Goldstein S."/>
            <person name="She X."/>
            <person name="Bult C.J."/>
            <person name="Agarwala R."/>
            <person name="Cherry J.L."/>
            <person name="DiCuccio M."/>
            <person name="Hlavina W."/>
            <person name="Kapustin Y."/>
            <person name="Meric P."/>
            <person name="Maglott D."/>
            <person name="Birtle Z."/>
            <person name="Marques A.C."/>
            <person name="Graves T."/>
            <person name="Zhou S."/>
            <person name="Teague B."/>
            <person name="Potamousis K."/>
            <person name="Churas C."/>
            <person name="Place M."/>
            <person name="Herschleb J."/>
            <person name="Runnheim R."/>
            <person name="Forrest D."/>
            <person name="Amos-Landgraf J."/>
            <person name="Schwartz D.C."/>
            <person name="Cheng Z."/>
            <person name="Lindblad-Toh K."/>
            <person name="Eichler E.E."/>
            <person name="Ponting C.P."/>
        </authorList>
    </citation>
    <scope>NUCLEOTIDE SEQUENCE [LARGE SCALE GENOMIC DNA]</scope>
    <source>
        <strain>C57BL/6J</strain>
    </source>
</reference>
<reference key="4">
    <citation type="journal article" date="2004" name="Genome Res.">
        <title>The status, quality, and expansion of the NIH full-length cDNA project: the Mammalian Gene Collection (MGC).</title>
        <authorList>
            <consortium name="The MGC Project Team"/>
        </authorList>
    </citation>
    <scope>NUCLEOTIDE SEQUENCE [LARGE SCALE MRNA]</scope>
    <source>
        <strain>C57BL/6J</strain>
        <tissue>Mammary gland</tissue>
    </source>
</reference>
<feature type="signal peptide" evidence="1">
    <location>
        <begin position="1"/>
        <end position="24"/>
    </location>
</feature>
<feature type="chain" id="PRO_0000010877" description="Interleukin-27 receptor subunit alpha">
    <location>
        <begin position="25"/>
        <end position="623"/>
    </location>
</feature>
<feature type="topological domain" description="Extracellular" evidence="1">
    <location>
        <begin position="25"/>
        <end position="510"/>
    </location>
</feature>
<feature type="transmembrane region" description="Helical" evidence="1">
    <location>
        <begin position="511"/>
        <end position="531"/>
    </location>
</feature>
<feature type="topological domain" description="Cytoplasmic" evidence="1">
    <location>
        <begin position="532"/>
        <end position="623"/>
    </location>
</feature>
<feature type="domain" description="Fibronectin type-III 1" evidence="2">
    <location>
        <begin position="30"/>
        <end position="124"/>
    </location>
</feature>
<feature type="domain" description="Fibronectin type-III 2" evidence="2">
    <location>
        <begin position="125"/>
        <end position="225"/>
    </location>
</feature>
<feature type="domain" description="Fibronectin type-III 3" evidence="2">
    <location>
        <begin position="316"/>
        <end position="412"/>
    </location>
</feature>
<feature type="domain" description="Fibronectin type-III 4" evidence="2">
    <location>
        <begin position="413"/>
        <end position="505"/>
    </location>
</feature>
<feature type="short sequence motif" description="WSXWS motif">
    <location>
        <begin position="211"/>
        <end position="215"/>
    </location>
</feature>
<feature type="short sequence motif" description="Box 1 motif">
    <location>
        <begin position="552"/>
        <end position="560"/>
    </location>
</feature>
<feature type="glycosylation site" description="N-linked (GlcNAc...) asparagine" evidence="1">
    <location>
        <position position="46"/>
    </location>
</feature>
<feature type="glycosylation site" description="N-linked (GlcNAc...) asparagine" evidence="1">
    <location>
        <position position="296"/>
    </location>
</feature>
<feature type="glycosylation site" description="N-linked (GlcNAc...) asparagine" evidence="1">
    <location>
        <position position="305"/>
    </location>
</feature>
<feature type="glycosylation site" description="N-linked (GlcNAc...) asparagine" evidence="1">
    <location>
        <position position="360"/>
    </location>
</feature>
<feature type="glycosylation site" description="N-linked (GlcNAc...) asparagine" evidence="1">
    <location>
        <position position="368"/>
    </location>
</feature>
<feature type="glycosylation site" description="N-linked (GlcNAc...) asparagine" evidence="1">
    <location>
        <position position="461"/>
    </location>
</feature>
<feature type="sequence conflict" description="In Ref. 1; AAC40121, 2; AAG27298 and 4; AAH32878." evidence="4" ref="1 2 4">
    <original>VLI</original>
    <variation>ALT</variation>
    <location>
        <begin position="156"/>
        <end position="158"/>
    </location>
</feature>
<feature type="sequence conflict" description="In Ref. 1; AAC40121, 2; AAG27298 and 4; AAH32878." evidence="4" ref="1 2 4">
    <original>T</original>
    <variation>A</variation>
    <location>
        <position position="170"/>
    </location>
</feature>
<feature type="sequence conflict" description="In Ref. 1; AAC40121, 2; AAG27298 and 4; AAH32878." evidence="4" ref="1 2 4">
    <original>L</original>
    <variation>S</variation>
    <location>
        <position position="476"/>
    </location>
</feature>
<feature type="sequence conflict" description="In Ref. 1; AAC40121, 2; AAG27298 and 4; AAH32878." evidence="4" ref="1 2 4">
    <original>N</original>
    <variation>D</variation>
    <location>
        <position position="497"/>
    </location>
</feature>
<feature type="strand" evidence="5">
    <location>
        <begin position="34"/>
        <end position="39"/>
    </location>
</feature>
<feature type="turn" evidence="5">
    <location>
        <begin position="40"/>
        <end position="43"/>
    </location>
</feature>
<feature type="strand" evidence="5">
    <location>
        <begin position="44"/>
        <end position="49"/>
    </location>
</feature>
<feature type="strand" evidence="5">
    <location>
        <begin position="60"/>
        <end position="68"/>
    </location>
</feature>
<feature type="strand" evidence="5">
    <location>
        <begin position="73"/>
        <end position="77"/>
    </location>
</feature>
<feature type="strand" evidence="5">
    <location>
        <begin position="83"/>
        <end position="87"/>
    </location>
</feature>
<feature type="helix" evidence="5">
    <location>
        <begin position="89"/>
        <end position="91"/>
    </location>
</feature>
<feature type="strand" evidence="5">
    <location>
        <begin position="97"/>
        <end position="104"/>
    </location>
</feature>
<feature type="strand" evidence="5">
    <location>
        <begin position="113"/>
        <end position="116"/>
    </location>
</feature>
<feature type="turn" evidence="5">
    <location>
        <begin position="117"/>
        <end position="119"/>
    </location>
</feature>
<feature type="strand" evidence="5">
    <location>
        <begin position="127"/>
        <end position="135"/>
    </location>
</feature>
<feature type="strand" evidence="5">
    <location>
        <begin position="137"/>
        <end position="139"/>
    </location>
</feature>
<feature type="strand" evidence="5">
    <location>
        <begin position="141"/>
        <end position="147"/>
    </location>
</feature>
<feature type="strand" evidence="5">
    <location>
        <begin position="150"/>
        <end position="152"/>
    </location>
</feature>
<feature type="strand" evidence="5">
    <location>
        <begin position="157"/>
        <end position="165"/>
    </location>
</feature>
<feature type="strand" evidence="5">
    <location>
        <begin position="172"/>
        <end position="179"/>
    </location>
</feature>
<feature type="turn" evidence="5">
    <location>
        <begin position="180"/>
        <end position="182"/>
    </location>
</feature>
<feature type="strand" evidence="5">
    <location>
        <begin position="186"/>
        <end position="188"/>
    </location>
</feature>
<feature type="strand" evidence="5">
    <location>
        <begin position="196"/>
        <end position="205"/>
    </location>
</feature>
<feature type="strand" evidence="5">
    <location>
        <begin position="218"/>
        <end position="221"/>
    </location>
</feature>
<sequence length="623" mass="69093">MNRLRVARLTPLELLLSLMSLLLGTRPHGSPGPLQCYSVGPLGILNCSWEPLGDLETPPVLYHQSQKYHPNRVWEVKVPSKQSWVTIPREQFTMADKLLIWGTQKGRPLWSSVSVNLETQMKPDTPQIFSQVDISEEATLEATVQWAPPVWPPQKVLICQFRYKECQAETWTRLEPQLKTDGLTPVEMQNLEPGTCYQVSGRCQVENGYPWGEWSSPLSFQTPFLDPEDVWVSGTVCETSGKRAALLVWKDPRPCVQVTYTVWFGAGDITTTQEEVPCCKSPVPAWMEWAVVSPGNSTSWVPPTNLSLVCLAPESAPCDVGVSSADGSPGIKVTWKQGTRKPLEYVVDWAQDGDSLDKLNWTRLPPGNLSTLLPGEFKGGVPYRITVTAVYSGGLAAAPSVWGFREELVPLAGPAVWRLPDDPPGTPVVAWGEVPRHQLRGQATHYTFCIQSRGLSTVCRNVSSQTQTATLPNLHLGSFKLWVTVSTVAGQGPPGPNLSLHLPDNRIRWKALPWFLSLWGLLLMGCGLSLASTRCLQARCLHWRHKLLPQWIWERVPDPANSNSGQPYIKEVSLPQPPKDGPILEVEEVELQPVVESPKASAPIYSGYEKHFLPTPEELGLLV</sequence>
<gene>
    <name type="primary">Il27ra</name>
    <name type="synonym">Tccr</name>
    <name type="synonym">Wsx1</name>
</gene>
<name>I27RA_MOUSE</name>
<organism>
    <name type="scientific">Mus musculus</name>
    <name type="common">Mouse</name>
    <dbReference type="NCBI Taxonomy" id="10090"/>
    <lineage>
        <taxon>Eukaryota</taxon>
        <taxon>Metazoa</taxon>
        <taxon>Chordata</taxon>
        <taxon>Craniata</taxon>
        <taxon>Vertebrata</taxon>
        <taxon>Euteleostomi</taxon>
        <taxon>Mammalia</taxon>
        <taxon>Eutheria</taxon>
        <taxon>Euarchontoglires</taxon>
        <taxon>Glires</taxon>
        <taxon>Rodentia</taxon>
        <taxon>Myomorpha</taxon>
        <taxon>Muroidea</taxon>
        <taxon>Muridae</taxon>
        <taxon>Murinae</taxon>
        <taxon>Mus</taxon>
        <taxon>Mus</taxon>
    </lineage>
</organism>
<comment type="function">
    <text>Receptor for IL27. Requires IL6ST/GP130 to mediate signal transduction in response to IL27. This signaling system acts through STAT3 and STAT1. Involved in the regulation of Th1-type immune responses. Also appears to be involved in innate defense mechanisms.</text>
</comment>
<comment type="subcellular location">
    <subcellularLocation>
        <location>Membrane</location>
        <topology>Single-pass type I membrane protein</topology>
    </subcellularLocation>
</comment>
<comment type="tissue specificity">
    <text evidence="3">Expressed in CD4+ and CD8+ T-cells, B-cells, natural killer cells and macrophages. Highest levels in CD4+ T-cells and natural killer cells. Expression highest in Th0 cells.</text>
</comment>
<comment type="induction">
    <text>Down-regulated on differentiation of CD4+ T-cells in both Th1 and TH2 cells.</text>
</comment>
<comment type="domain">
    <text>The WSXWS motif appears to be necessary for proper protein folding and thereby efficient intracellular transport and cell-surface receptor binding.</text>
</comment>
<comment type="domain">
    <text>The box 1 motif is required for JAK interaction and/or activation.</text>
</comment>
<comment type="similarity">
    <text evidence="4">Belongs to the type I cytokine receptor family. Type 2 subfamily.</text>
</comment>
<dbReference type="EMBL" id="AF053005">
    <property type="protein sequence ID" value="AAC40121.1"/>
    <property type="molecule type" value="mRNA"/>
</dbReference>
<dbReference type="EMBL" id="AF265243">
    <property type="protein sequence ID" value="AAG27298.1"/>
    <property type="molecule type" value="mRNA"/>
</dbReference>
<dbReference type="EMBL" id="AC156028">
    <property type="status" value="NOT_ANNOTATED_CDS"/>
    <property type="molecule type" value="Genomic_DNA"/>
</dbReference>
<dbReference type="EMBL" id="BC032878">
    <property type="protein sequence ID" value="AAH32878.1"/>
    <property type="molecule type" value="mRNA"/>
</dbReference>
<dbReference type="CCDS" id="CCDS22465.1"/>
<dbReference type="RefSeq" id="NP_057880.2">
    <property type="nucleotide sequence ID" value="NM_016671.4"/>
</dbReference>
<dbReference type="PDB" id="7Z0L">
    <property type="method" value="EM"/>
    <property type="resolution" value="4.00 A"/>
    <property type="chains" value="C=28-224"/>
</dbReference>
<dbReference type="PDB" id="7ZG0">
    <property type="method" value="X-ray"/>
    <property type="resolution" value="3.18 A"/>
    <property type="chains" value="E/F=24-225"/>
</dbReference>
<dbReference type="PDBsum" id="7Z0L"/>
<dbReference type="PDBsum" id="7ZG0"/>
<dbReference type="EMDB" id="EMD-14427"/>
<dbReference type="SMR" id="O70394"/>
<dbReference type="FunCoup" id="O70394">
    <property type="interactions" value="386"/>
</dbReference>
<dbReference type="STRING" id="10090.ENSMUSP00000005601"/>
<dbReference type="GlyCosmos" id="O70394">
    <property type="glycosylation" value="6 sites, No reported glycans"/>
</dbReference>
<dbReference type="GlyGen" id="O70394">
    <property type="glycosylation" value="6 sites"/>
</dbReference>
<dbReference type="PhosphoSitePlus" id="O70394"/>
<dbReference type="SwissPalm" id="O70394"/>
<dbReference type="PaxDb" id="10090-ENSMUSP00000005601"/>
<dbReference type="ProteomicsDB" id="267033"/>
<dbReference type="Antibodypedia" id="13590">
    <property type="antibodies" value="480 antibodies from 36 providers"/>
</dbReference>
<dbReference type="DNASU" id="50931"/>
<dbReference type="Ensembl" id="ENSMUST00000005601.9">
    <property type="protein sequence ID" value="ENSMUSP00000005601.8"/>
    <property type="gene ID" value="ENSMUSG00000005465.10"/>
</dbReference>
<dbReference type="GeneID" id="50931"/>
<dbReference type="KEGG" id="mmu:50931"/>
<dbReference type="UCSC" id="uc009mlr.2">
    <property type="organism name" value="mouse"/>
</dbReference>
<dbReference type="AGR" id="MGI:1355318"/>
<dbReference type="CTD" id="9466"/>
<dbReference type="MGI" id="MGI:1355318">
    <property type="gene designation" value="Il27ra"/>
</dbReference>
<dbReference type="VEuPathDB" id="HostDB:ENSMUSG00000005465"/>
<dbReference type="eggNOG" id="ENOG502RF72">
    <property type="taxonomic scope" value="Eukaryota"/>
</dbReference>
<dbReference type="GeneTree" id="ENSGT00700000104610"/>
<dbReference type="HOGENOM" id="CLU_029896_0_0_1"/>
<dbReference type="InParanoid" id="O70394"/>
<dbReference type="OMA" id="TCCCSLI"/>
<dbReference type="OrthoDB" id="5989951at2759"/>
<dbReference type="PhylomeDB" id="O70394"/>
<dbReference type="TreeFam" id="TF338122"/>
<dbReference type="Reactome" id="R-MMU-8984722">
    <property type="pathway name" value="Interleukin-35 Signalling"/>
</dbReference>
<dbReference type="Reactome" id="R-MMU-9020956">
    <property type="pathway name" value="Interleukin-27 signaling"/>
</dbReference>
<dbReference type="BioGRID-ORCS" id="50931">
    <property type="hits" value="4 hits in 114 CRISPR screens"/>
</dbReference>
<dbReference type="ChiTaRS" id="Il27ra">
    <property type="organism name" value="mouse"/>
</dbReference>
<dbReference type="PRO" id="PR:O70394"/>
<dbReference type="Proteomes" id="UP000000589">
    <property type="component" value="Chromosome 8"/>
</dbReference>
<dbReference type="RNAct" id="O70394">
    <property type="molecule type" value="protein"/>
</dbReference>
<dbReference type="Bgee" id="ENSMUSG00000005465">
    <property type="expression patterns" value="Expressed in ileal epithelium and 66 other cell types or tissues"/>
</dbReference>
<dbReference type="GO" id="GO:0005737">
    <property type="term" value="C:cytoplasm"/>
    <property type="evidence" value="ECO:0000304"/>
    <property type="project" value="Reactome"/>
</dbReference>
<dbReference type="GO" id="GO:0005576">
    <property type="term" value="C:extracellular region"/>
    <property type="evidence" value="ECO:0000304"/>
    <property type="project" value="Reactome"/>
</dbReference>
<dbReference type="GO" id="GO:0005886">
    <property type="term" value="C:plasma membrane"/>
    <property type="evidence" value="ECO:0000304"/>
    <property type="project" value="Reactome"/>
</dbReference>
<dbReference type="GO" id="GO:0045509">
    <property type="term" value="F:interleukin-27 receptor activity"/>
    <property type="evidence" value="ECO:0000314"/>
    <property type="project" value="MGI"/>
</dbReference>
<dbReference type="GO" id="GO:0050830">
    <property type="term" value="P:defense response to Gram-positive bacterium"/>
    <property type="evidence" value="ECO:0000315"/>
    <property type="project" value="MGI"/>
</dbReference>
<dbReference type="GO" id="GO:0002692">
    <property type="term" value="P:negative regulation of cellular extravasation"/>
    <property type="evidence" value="ECO:0000316"/>
    <property type="project" value="BHF-UCL"/>
</dbReference>
<dbReference type="GO" id="GO:0032700">
    <property type="term" value="P:negative regulation of interleukin-17 production"/>
    <property type="evidence" value="ECO:0000316"/>
    <property type="project" value="BHF-UCL"/>
</dbReference>
<dbReference type="GO" id="GO:0032715">
    <property type="term" value="P:negative regulation of interleukin-6 production"/>
    <property type="evidence" value="ECO:0000316"/>
    <property type="project" value="BHF-UCL"/>
</dbReference>
<dbReference type="GO" id="GO:0043524">
    <property type="term" value="P:negative regulation of neuron apoptotic process"/>
    <property type="evidence" value="ECO:0007669"/>
    <property type="project" value="Ensembl"/>
</dbReference>
<dbReference type="GO" id="GO:2000408">
    <property type="term" value="P:negative regulation of T cell extravasation"/>
    <property type="evidence" value="ECO:0000316"/>
    <property type="project" value="BHF-UCL"/>
</dbReference>
<dbReference type="GO" id="GO:2000317">
    <property type="term" value="P:negative regulation of T-helper 17 type immune response"/>
    <property type="evidence" value="ECO:0000316"/>
    <property type="project" value="BHF-UCL"/>
</dbReference>
<dbReference type="GO" id="GO:0032720">
    <property type="term" value="P:negative regulation of tumor necrosis factor production"/>
    <property type="evidence" value="ECO:0000316"/>
    <property type="project" value="BHF-UCL"/>
</dbReference>
<dbReference type="GO" id="GO:0002829">
    <property type="term" value="P:negative regulation of type 2 immune response"/>
    <property type="evidence" value="ECO:0000315"/>
    <property type="project" value="MGI"/>
</dbReference>
<dbReference type="GO" id="GO:0002827">
    <property type="term" value="P:positive regulation of T-helper 1 type immune response"/>
    <property type="evidence" value="ECO:0000315"/>
    <property type="project" value="MGI"/>
</dbReference>
<dbReference type="GO" id="GO:0032729">
    <property type="term" value="P:positive regulation of type II interferon production"/>
    <property type="evidence" value="ECO:0000315"/>
    <property type="project" value="MGI"/>
</dbReference>
<dbReference type="GO" id="GO:0048302">
    <property type="term" value="P:regulation of isotype switching to IgG isotypes"/>
    <property type="evidence" value="ECO:0000315"/>
    <property type="project" value="MGI"/>
</dbReference>
<dbReference type="CDD" id="cd00063">
    <property type="entry name" value="FN3"/>
    <property type="match status" value="1"/>
</dbReference>
<dbReference type="FunFam" id="2.60.40.10:FF:001712">
    <property type="entry name" value="Interleukin-27 receptor subunit alpha"/>
    <property type="match status" value="1"/>
</dbReference>
<dbReference type="FunFam" id="2.60.40.10:FF:001691">
    <property type="entry name" value="interleukin-27 receptor subunit alpha"/>
    <property type="match status" value="1"/>
</dbReference>
<dbReference type="Gene3D" id="2.60.40.10">
    <property type="entry name" value="Immunoglobulins"/>
    <property type="match status" value="2"/>
</dbReference>
<dbReference type="InterPro" id="IPR003961">
    <property type="entry name" value="FN3_dom"/>
</dbReference>
<dbReference type="InterPro" id="IPR036116">
    <property type="entry name" value="FN3_sf"/>
</dbReference>
<dbReference type="InterPro" id="IPR013783">
    <property type="entry name" value="Ig-like_fold"/>
</dbReference>
<dbReference type="InterPro" id="IPR052672">
    <property type="entry name" value="Type1_Cytokine_Rcpt_Type2"/>
</dbReference>
<dbReference type="PANTHER" id="PTHR48423">
    <property type="entry name" value="INTERLEUKIN-27 RECEPTOR SUBUNIT ALPHA"/>
    <property type="match status" value="1"/>
</dbReference>
<dbReference type="PANTHER" id="PTHR48423:SF1">
    <property type="entry name" value="INTERLEUKIN-27 RECEPTOR SUBUNIT ALPHA"/>
    <property type="match status" value="1"/>
</dbReference>
<dbReference type="SMART" id="SM00060">
    <property type="entry name" value="FN3"/>
    <property type="match status" value="3"/>
</dbReference>
<dbReference type="SUPFAM" id="SSF49265">
    <property type="entry name" value="Fibronectin type III"/>
    <property type="match status" value="2"/>
</dbReference>
<dbReference type="PROSITE" id="PS50853">
    <property type="entry name" value="FN3"/>
    <property type="match status" value="4"/>
</dbReference>
<accession>O70394</accession>
<accession>E9QNY4</accession>
<evidence type="ECO:0000255" key="1"/>
<evidence type="ECO:0000255" key="2">
    <source>
        <dbReference type="PROSITE-ProRule" id="PRU00316"/>
    </source>
</evidence>
<evidence type="ECO:0000269" key="3">
    <source>
    </source>
</evidence>
<evidence type="ECO:0000305" key="4"/>
<evidence type="ECO:0007829" key="5">
    <source>
        <dbReference type="PDB" id="7ZG0"/>
    </source>
</evidence>